<name>PUR9_HAEIN</name>
<protein>
    <recommendedName>
        <fullName evidence="1">Bifunctional purine biosynthesis protein PurH</fullName>
    </recommendedName>
    <domain>
        <recommendedName>
            <fullName evidence="1">Phosphoribosylaminoimidazolecarboxamide formyltransferase</fullName>
            <ecNumber evidence="1">2.1.2.3</ecNumber>
        </recommendedName>
        <alternativeName>
            <fullName evidence="1">AICAR transformylase</fullName>
        </alternativeName>
    </domain>
    <domain>
        <recommendedName>
            <fullName evidence="1">IMP cyclohydrolase</fullName>
            <ecNumber evidence="1">3.5.4.10</ecNumber>
        </recommendedName>
        <alternativeName>
            <fullName evidence="1">ATIC</fullName>
        </alternativeName>
        <alternativeName>
            <fullName evidence="1">IMP synthase</fullName>
        </alternativeName>
        <alternativeName>
            <fullName evidence="1">Inosinicase</fullName>
        </alternativeName>
    </domain>
</protein>
<gene>
    <name evidence="1" type="primary">purH</name>
    <name type="ordered locus">HI_0887</name>
</gene>
<reference key="1">
    <citation type="journal article" date="1995" name="Science">
        <title>Whole-genome random sequencing and assembly of Haemophilus influenzae Rd.</title>
        <authorList>
            <person name="Fleischmann R.D."/>
            <person name="Adams M.D."/>
            <person name="White O."/>
            <person name="Clayton R.A."/>
            <person name="Kirkness E.F."/>
            <person name="Kerlavage A.R."/>
            <person name="Bult C.J."/>
            <person name="Tomb J.-F."/>
            <person name="Dougherty B.A."/>
            <person name="Merrick J.M."/>
            <person name="McKenney K."/>
            <person name="Sutton G.G."/>
            <person name="FitzHugh W."/>
            <person name="Fields C.A."/>
            <person name="Gocayne J.D."/>
            <person name="Scott J.D."/>
            <person name="Shirley R."/>
            <person name="Liu L.-I."/>
            <person name="Glodek A."/>
            <person name="Kelley J.M."/>
            <person name="Weidman J.F."/>
            <person name="Phillips C.A."/>
            <person name="Spriggs T."/>
            <person name="Hedblom E."/>
            <person name="Cotton M.D."/>
            <person name="Utterback T.R."/>
            <person name="Hanna M.C."/>
            <person name="Nguyen D.T."/>
            <person name="Saudek D.M."/>
            <person name="Brandon R.C."/>
            <person name="Fine L.D."/>
            <person name="Fritchman J.L."/>
            <person name="Fuhrmann J.L."/>
            <person name="Geoghagen N.S.M."/>
            <person name="Gnehm C.L."/>
            <person name="McDonald L.A."/>
            <person name="Small K.V."/>
            <person name="Fraser C.M."/>
            <person name="Smith H.O."/>
            <person name="Venter J.C."/>
        </authorList>
    </citation>
    <scope>NUCLEOTIDE SEQUENCE [LARGE SCALE GENOMIC DNA]</scope>
    <source>
        <strain>ATCC 51907 / DSM 11121 / KW20 / Rd</strain>
    </source>
</reference>
<organism>
    <name type="scientific">Haemophilus influenzae (strain ATCC 51907 / DSM 11121 / KW20 / Rd)</name>
    <dbReference type="NCBI Taxonomy" id="71421"/>
    <lineage>
        <taxon>Bacteria</taxon>
        <taxon>Pseudomonadati</taxon>
        <taxon>Pseudomonadota</taxon>
        <taxon>Gammaproteobacteria</taxon>
        <taxon>Pasteurellales</taxon>
        <taxon>Pasteurellaceae</taxon>
        <taxon>Haemophilus</taxon>
    </lineage>
</organism>
<comment type="catalytic activity">
    <reaction evidence="1">
        <text>(6R)-10-formyltetrahydrofolate + 5-amino-1-(5-phospho-beta-D-ribosyl)imidazole-4-carboxamide = 5-formamido-1-(5-phospho-D-ribosyl)imidazole-4-carboxamide + (6S)-5,6,7,8-tetrahydrofolate</text>
        <dbReference type="Rhea" id="RHEA:22192"/>
        <dbReference type="ChEBI" id="CHEBI:57453"/>
        <dbReference type="ChEBI" id="CHEBI:58467"/>
        <dbReference type="ChEBI" id="CHEBI:58475"/>
        <dbReference type="ChEBI" id="CHEBI:195366"/>
        <dbReference type="EC" id="2.1.2.3"/>
    </reaction>
</comment>
<comment type="catalytic activity">
    <reaction evidence="1">
        <text>IMP + H2O = 5-formamido-1-(5-phospho-D-ribosyl)imidazole-4-carboxamide</text>
        <dbReference type="Rhea" id="RHEA:18445"/>
        <dbReference type="ChEBI" id="CHEBI:15377"/>
        <dbReference type="ChEBI" id="CHEBI:58053"/>
        <dbReference type="ChEBI" id="CHEBI:58467"/>
        <dbReference type="EC" id="3.5.4.10"/>
    </reaction>
</comment>
<comment type="pathway">
    <text evidence="1">Purine metabolism; IMP biosynthesis via de novo pathway; 5-formamido-1-(5-phospho-D-ribosyl)imidazole-4-carboxamide from 5-amino-1-(5-phospho-D-ribosyl)imidazole-4-carboxamide (10-formyl THF route): step 1/1.</text>
</comment>
<comment type="pathway">
    <text evidence="1">Purine metabolism; IMP biosynthesis via de novo pathway; IMP from 5-formamido-1-(5-phospho-D-ribosyl)imidazole-4-carboxamide: step 1/1.</text>
</comment>
<comment type="domain">
    <text evidence="1">The IMP cyclohydrolase activity resides in the N-terminal region.</text>
</comment>
<comment type="similarity">
    <text evidence="1 3">Belongs to the PurH family.</text>
</comment>
<evidence type="ECO:0000255" key="1">
    <source>
        <dbReference type="HAMAP-Rule" id="MF_00139"/>
    </source>
</evidence>
<evidence type="ECO:0000255" key="2">
    <source>
        <dbReference type="PROSITE-ProRule" id="PRU01202"/>
    </source>
</evidence>
<evidence type="ECO:0000305" key="3"/>
<dbReference type="EC" id="2.1.2.3" evidence="1"/>
<dbReference type="EC" id="3.5.4.10" evidence="1"/>
<dbReference type="EMBL" id="L42023">
    <property type="protein sequence ID" value="AAC22544.1"/>
    <property type="molecule type" value="Genomic_DNA"/>
</dbReference>
<dbReference type="PIR" id="B64100">
    <property type="entry name" value="B64100"/>
</dbReference>
<dbReference type="RefSeq" id="NP_439048.1">
    <property type="nucleotide sequence ID" value="NC_000907.1"/>
</dbReference>
<dbReference type="SMR" id="P43852"/>
<dbReference type="STRING" id="71421.HI_0887"/>
<dbReference type="EnsemblBacteria" id="AAC22544">
    <property type="protein sequence ID" value="AAC22544"/>
    <property type="gene ID" value="HI_0887"/>
</dbReference>
<dbReference type="KEGG" id="hin:HI_0887"/>
<dbReference type="PATRIC" id="fig|71421.8.peg.929"/>
<dbReference type="eggNOG" id="COG0138">
    <property type="taxonomic scope" value="Bacteria"/>
</dbReference>
<dbReference type="HOGENOM" id="CLU_016316_5_2_6"/>
<dbReference type="OrthoDB" id="9802065at2"/>
<dbReference type="PhylomeDB" id="P43852"/>
<dbReference type="BioCyc" id="HINF71421:G1GJ1-927-MONOMER"/>
<dbReference type="UniPathway" id="UPA00074">
    <property type="reaction ID" value="UER00133"/>
</dbReference>
<dbReference type="UniPathway" id="UPA00074">
    <property type="reaction ID" value="UER00135"/>
</dbReference>
<dbReference type="Proteomes" id="UP000000579">
    <property type="component" value="Chromosome"/>
</dbReference>
<dbReference type="GO" id="GO:0005829">
    <property type="term" value="C:cytosol"/>
    <property type="evidence" value="ECO:0000318"/>
    <property type="project" value="GO_Central"/>
</dbReference>
<dbReference type="GO" id="GO:0003937">
    <property type="term" value="F:IMP cyclohydrolase activity"/>
    <property type="evidence" value="ECO:0000318"/>
    <property type="project" value="GO_Central"/>
</dbReference>
<dbReference type="GO" id="GO:0004643">
    <property type="term" value="F:phosphoribosylaminoimidazolecarboxamide formyltransferase activity"/>
    <property type="evidence" value="ECO:0000318"/>
    <property type="project" value="GO_Central"/>
</dbReference>
<dbReference type="GO" id="GO:0006189">
    <property type="term" value="P:'de novo' IMP biosynthetic process"/>
    <property type="evidence" value="ECO:0000318"/>
    <property type="project" value="GO_Central"/>
</dbReference>
<dbReference type="CDD" id="cd01421">
    <property type="entry name" value="IMPCH"/>
    <property type="match status" value="1"/>
</dbReference>
<dbReference type="FunFam" id="3.40.140.20:FF:000001">
    <property type="entry name" value="Bifunctional purine biosynthesis protein PurH"/>
    <property type="match status" value="1"/>
</dbReference>
<dbReference type="FunFam" id="3.40.140.20:FF:000002">
    <property type="entry name" value="Bifunctional purine biosynthesis protein PurH"/>
    <property type="match status" value="1"/>
</dbReference>
<dbReference type="FunFam" id="3.40.50.1380:FF:000001">
    <property type="entry name" value="Bifunctional purine biosynthesis protein PurH"/>
    <property type="match status" value="1"/>
</dbReference>
<dbReference type="Gene3D" id="3.40.140.20">
    <property type="match status" value="2"/>
</dbReference>
<dbReference type="Gene3D" id="3.40.50.1380">
    <property type="entry name" value="Methylglyoxal synthase-like domain"/>
    <property type="match status" value="1"/>
</dbReference>
<dbReference type="HAMAP" id="MF_00139">
    <property type="entry name" value="PurH"/>
    <property type="match status" value="1"/>
</dbReference>
<dbReference type="InterPro" id="IPR024051">
    <property type="entry name" value="AICAR_Tfase_dup_dom_sf"/>
</dbReference>
<dbReference type="InterPro" id="IPR016193">
    <property type="entry name" value="Cytidine_deaminase-like"/>
</dbReference>
<dbReference type="InterPro" id="IPR011607">
    <property type="entry name" value="MGS-like_dom"/>
</dbReference>
<dbReference type="InterPro" id="IPR036914">
    <property type="entry name" value="MGS-like_dom_sf"/>
</dbReference>
<dbReference type="InterPro" id="IPR002695">
    <property type="entry name" value="PurH-like"/>
</dbReference>
<dbReference type="NCBIfam" id="NF002049">
    <property type="entry name" value="PRK00881.1"/>
    <property type="match status" value="1"/>
</dbReference>
<dbReference type="NCBIfam" id="TIGR00355">
    <property type="entry name" value="purH"/>
    <property type="match status" value="1"/>
</dbReference>
<dbReference type="PANTHER" id="PTHR11692:SF0">
    <property type="entry name" value="BIFUNCTIONAL PURINE BIOSYNTHESIS PROTEIN ATIC"/>
    <property type="match status" value="1"/>
</dbReference>
<dbReference type="PANTHER" id="PTHR11692">
    <property type="entry name" value="BIFUNCTIONAL PURINE BIOSYNTHESIS PROTEIN PURH"/>
    <property type="match status" value="1"/>
</dbReference>
<dbReference type="Pfam" id="PF01808">
    <property type="entry name" value="AICARFT_IMPCHas"/>
    <property type="match status" value="1"/>
</dbReference>
<dbReference type="Pfam" id="PF02142">
    <property type="entry name" value="MGS"/>
    <property type="match status" value="1"/>
</dbReference>
<dbReference type="PIRSF" id="PIRSF000414">
    <property type="entry name" value="AICARFT_IMPCHas"/>
    <property type="match status" value="1"/>
</dbReference>
<dbReference type="SMART" id="SM00798">
    <property type="entry name" value="AICARFT_IMPCHas"/>
    <property type="match status" value="1"/>
</dbReference>
<dbReference type="SMART" id="SM00851">
    <property type="entry name" value="MGS"/>
    <property type="match status" value="1"/>
</dbReference>
<dbReference type="SUPFAM" id="SSF53927">
    <property type="entry name" value="Cytidine deaminase-like"/>
    <property type="match status" value="1"/>
</dbReference>
<dbReference type="SUPFAM" id="SSF52335">
    <property type="entry name" value="Methylglyoxal synthase-like"/>
    <property type="match status" value="1"/>
</dbReference>
<dbReference type="PROSITE" id="PS51855">
    <property type="entry name" value="MGS"/>
    <property type="match status" value="1"/>
</dbReference>
<proteinExistence type="inferred from homology"/>
<accession>P43852</accession>
<sequence length="532" mass="58350">MADRPIRQALLSVSDKTGIVEFAQGLVKRGVKLLSTGGTAKLLAQNALPVIEVSDYTGFPEMMDGRVKTLHPKVHGGILGRRGTDDAIMQQHGIEGIDMVVVNLYPFAATVAKPDCTLADAVENIDIGGPTMVRSAAKNHKDVAIVVNNHDFNAILAEMDQHQNSLTFETRFDLAIKAFEHTAQYDSMIANYFGQLVKPYHIAEEEEANAKCGQFPRTLNLNFVRKQAMRYGENSHQNAAFYVDLNVKEASVATANQLQGKALSYNNIADTDAALECVKEFDDPACVIVKHANPCGVALGKDILDAYNRAYQTDPTSAFGGIIAFNRELDEKTANEIVERQFVEVIIAPKVSAEAQEVMKRKKNVRLLECGEWTSRSERLDFKRVNGGLLVQDADLGMVGVDDLKVVSKRQPTEQELKDLLFCWKVAKFVKSNAIVYAKDNQTIGIGAGQMSRVYSAKIAGIKAQDEGLEVAGCVMASDAFFPFRDGIDAAAKVGIQCVIHPGGSMRDQEVIDAADEHNMVMVLTGMRHFRH</sequence>
<feature type="chain" id="PRO_0000192095" description="Bifunctional purine biosynthesis protein PurH">
    <location>
        <begin position="1"/>
        <end position="532"/>
    </location>
</feature>
<feature type="domain" description="MGS-like" evidence="2">
    <location>
        <begin position="1"/>
        <end position="147"/>
    </location>
</feature>
<keyword id="KW-0378">Hydrolase</keyword>
<keyword id="KW-0511">Multifunctional enzyme</keyword>
<keyword id="KW-0658">Purine biosynthesis</keyword>
<keyword id="KW-1185">Reference proteome</keyword>
<keyword id="KW-0808">Transferase</keyword>